<name>Y1352_PSEPK</name>
<comment type="function">
    <text evidence="1">Nucleotide-binding protein.</text>
</comment>
<comment type="similarity">
    <text evidence="1">Belongs to the YajQ family.</text>
</comment>
<reference key="1">
    <citation type="journal article" date="2002" name="Environ. Microbiol.">
        <title>Complete genome sequence and comparative analysis of the metabolically versatile Pseudomonas putida KT2440.</title>
        <authorList>
            <person name="Nelson K.E."/>
            <person name="Weinel C."/>
            <person name="Paulsen I.T."/>
            <person name="Dodson R.J."/>
            <person name="Hilbert H."/>
            <person name="Martins dos Santos V.A.P."/>
            <person name="Fouts D.E."/>
            <person name="Gill S.R."/>
            <person name="Pop M."/>
            <person name="Holmes M."/>
            <person name="Brinkac L.M."/>
            <person name="Beanan M.J."/>
            <person name="DeBoy R.T."/>
            <person name="Daugherty S.C."/>
            <person name="Kolonay J.F."/>
            <person name="Madupu R."/>
            <person name="Nelson W.C."/>
            <person name="White O."/>
            <person name="Peterson J.D."/>
            <person name="Khouri H.M."/>
            <person name="Hance I."/>
            <person name="Chris Lee P."/>
            <person name="Holtzapple E.K."/>
            <person name="Scanlan D."/>
            <person name="Tran K."/>
            <person name="Moazzez A."/>
            <person name="Utterback T.R."/>
            <person name="Rizzo M."/>
            <person name="Lee K."/>
            <person name="Kosack D."/>
            <person name="Moestl D."/>
            <person name="Wedler H."/>
            <person name="Lauber J."/>
            <person name="Stjepandic D."/>
            <person name="Hoheisel J."/>
            <person name="Straetz M."/>
            <person name="Heim S."/>
            <person name="Kiewitz C."/>
            <person name="Eisen J.A."/>
            <person name="Timmis K.N."/>
            <person name="Duesterhoeft A."/>
            <person name="Tuemmler B."/>
            <person name="Fraser C.M."/>
        </authorList>
    </citation>
    <scope>NUCLEOTIDE SEQUENCE [LARGE SCALE GENOMIC DNA]</scope>
    <source>
        <strain>ATCC 47054 / DSM 6125 / CFBP 8728 / NCIMB 11950 / KT2440</strain>
    </source>
</reference>
<dbReference type="EMBL" id="AE015451">
    <property type="protein sequence ID" value="AAN66975.1"/>
    <property type="molecule type" value="Genomic_DNA"/>
</dbReference>
<dbReference type="RefSeq" id="NP_743511.1">
    <property type="nucleotide sequence ID" value="NC_002947.4"/>
</dbReference>
<dbReference type="RefSeq" id="WP_003251890.1">
    <property type="nucleotide sequence ID" value="NZ_CP169744.1"/>
</dbReference>
<dbReference type="SMR" id="P59560"/>
<dbReference type="STRING" id="160488.PP_1352"/>
<dbReference type="PaxDb" id="160488-PP_1352"/>
<dbReference type="KEGG" id="ppu:PP_1352"/>
<dbReference type="PATRIC" id="fig|160488.4.peg.1431"/>
<dbReference type="eggNOG" id="COG1666">
    <property type="taxonomic scope" value="Bacteria"/>
</dbReference>
<dbReference type="HOGENOM" id="CLU_099839_1_0_6"/>
<dbReference type="OrthoDB" id="9801447at2"/>
<dbReference type="PhylomeDB" id="P59560"/>
<dbReference type="BioCyc" id="PPUT160488:G1G01-1440-MONOMER"/>
<dbReference type="Proteomes" id="UP000000556">
    <property type="component" value="Chromosome"/>
</dbReference>
<dbReference type="GO" id="GO:0005829">
    <property type="term" value="C:cytosol"/>
    <property type="evidence" value="ECO:0007669"/>
    <property type="project" value="TreeGrafter"/>
</dbReference>
<dbReference type="GO" id="GO:0000166">
    <property type="term" value="F:nucleotide binding"/>
    <property type="evidence" value="ECO:0007669"/>
    <property type="project" value="TreeGrafter"/>
</dbReference>
<dbReference type="CDD" id="cd11740">
    <property type="entry name" value="YajQ_like"/>
    <property type="match status" value="1"/>
</dbReference>
<dbReference type="FunFam" id="3.30.70.860:FF:000001">
    <property type="entry name" value="UPF0234 protein YajQ"/>
    <property type="match status" value="1"/>
</dbReference>
<dbReference type="Gene3D" id="3.30.70.860">
    <property type="match status" value="1"/>
</dbReference>
<dbReference type="Gene3D" id="3.30.70.990">
    <property type="entry name" value="YajQ-like, domain 2"/>
    <property type="match status" value="1"/>
</dbReference>
<dbReference type="HAMAP" id="MF_00632">
    <property type="entry name" value="YajQ"/>
    <property type="match status" value="1"/>
</dbReference>
<dbReference type="InterPro" id="IPR007551">
    <property type="entry name" value="DUF520"/>
</dbReference>
<dbReference type="InterPro" id="IPR035571">
    <property type="entry name" value="UPF0234-like_C"/>
</dbReference>
<dbReference type="InterPro" id="IPR035570">
    <property type="entry name" value="UPF0234_N"/>
</dbReference>
<dbReference type="InterPro" id="IPR036183">
    <property type="entry name" value="YajQ-like_sf"/>
</dbReference>
<dbReference type="NCBIfam" id="NF003819">
    <property type="entry name" value="PRK05412.1"/>
    <property type="match status" value="1"/>
</dbReference>
<dbReference type="PANTHER" id="PTHR30476">
    <property type="entry name" value="UPF0234 PROTEIN YAJQ"/>
    <property type="match status" value="1"/>
</dbReference>
<dbReference type="PANTHER" id="PTHR30476:SF0">
    <property type="entry name" value="UPF0234 PROTEIN YAJQ"/>
    <property type="match status" value="1"/>
</dbReference>
<dbReference type="Pfam" id="PF04461">
    <property type="entry name" value="DUF520"/>
    <property type="match status" value="1"/>
</dbReference>
<dbReference type="SUPFAM" id="SSF89963">
    <property type="entry name" value="YajQ-like"/>
    <property type="match status" value="2"/>
</dbReference>
<keyword id="KW-0547">Nucleotide-binding</keyword>
<keyword id="KW-1185">Reference proteome</keyword>
<feature type="chain" id="PRO_0000106194" description="Nucleotide-binding protein PP_1352">
    <location>
        <begin position="1"/>
        <end position="161"/>
    </location>
</feature>
<accession>P59560</accession>
<evidence type="ECO:0000255" key="1">
    <source>
        <dbReference type="HAMAP-Rule" id="MF_00632"/>
    </source>
</evidence>
<proteinExistence type="inferred from homology"/>
<protein>
    <recommendedName>
        <fullName evidence="1">Nucleotide-binding protein PP_1352</fullName>
    </recommendedName>
</protein>
<organism>
    <name type="scientific">Pseudomonas putida (strain ATCC 47054 / DSM 6125 / CFBP 8728 / NCIMB 11950 / KT2440)</name>
    <dbReference type="NCBI Taxonomy" id="160488"/>
    <lineage>
        <taxon>Bacteria</taxon>
        <taxon>Pseudomonadati</taxon>
        <taxon>Pseudomonadota</taxon>
        <taxon>Gammaproteobacteria</taxon>
        <taxon>Pseudomonadales</taxon>
        <taxon>Pseudomonadaceae</taxon>
        <taxon>Pseudomonas</taxon>
    </lineage>
</organism>
<sequence length="161" mass="18561">MPSFDVVSELDKHEVQNAVDNAIKELDRRYDLKGKGTFEFKDKEQTVMLTAEEEFQLEAMLEILRLALVKRKIDVKCLETKDPYASGKEKKQEAKFREGIDKDLAKKIVATIKDGKLKVQAAIQGEQVRVTGKKRDDLQEAIALLRTKEFDMPLQFNNFRD</sequence>
<gene>
    <name type="ordered locus">PP_1352</name>
</gene>